<protein>
    <recommendedName>
        <fullName>Mitochondrial substrate carrier family protein W</fullName>
    </recommendedName>
</protein>
<name>MCFW_DICDI</name>
<proteinExistence type="inferred from homology"/>
<comment type="function">
    <text evidence="1">Mitochondrial solute carriers shuttle metabolites, nucleotides, and cofactors through the mitochondrial inner membrane.</text>
</comment>
<comment type="subcellular location">
    <subcellularLocation>
        <location evidence="1">Mitochondrion inner membrane</location>
        <topology evidence="1">Multi-pass membrane protein</topology>
    </subcellularLocation>
</comment>
<comment type="similarity">
    <text evidence="3">Belongs to the mitochondrial carrier (TC 2.A.29) family.</text>
</comment>
<accession>Q54FU9</accession>
<evidence type="ECO:0000250" key="1"/>
<evidence type="ECO:0000255" key="2"/>
<evidence type="ECO:0000305" key="3"/>
<dbReference type="EMBL" id="AAFI02000164">
    <property type="protein sequence ID" value="EAL62195.1"/>
    <property type="molecule type" value="Genomic_DNA"/>
</dbReference>
<dbReference type="RefSeq" id="XP_635668.1">
    <property type="nucleotide sequence ID" value="XM_630576.1"/>
</dbReference>
<dbReference type="SMR" id="Q54FU9"/>
<dbReference type="FunCoup" id="Q54FU9">
    <property type="interactions" value="1"/>
</dbReference>
<dbReference type="STRING" id="44689.Q54FU9"/>
<dbReference type="PaxDb" id="44689-DDB0234130"/>
<dbReference type="EnsemblProtists" id="EAL62195">
    <property type="protein sequence ID" value="EAL62195"/>
    <property type="gene ID" value="DDB_G0290669"/>
</dbReference>
<dbReference type="GeneID" id="8627740"/>
<dbReference type="KEGG" id="ddi:DDB_G0290669"/>
<dbReference type="dictyBase" id="DDB_G0290669">
    <property type="gene designation" value="mcfW"/>
</dbReference>
<dbReference type="VEuPathDB" id="AmoebaDB:DDB_G0290669"/>
<dbReference type="eggNOG" id="KOG0764">
    <property type="taxonomic scope" value="Eukaryota"/>
</dbReference>
<dbReference type="HOGENOM" id="CLU_015166_6_4_1"/>
<dbReference type="InParanoid" id="Q54FU9"/>
<dbReference type="OMA" id="CLQYADH"/>
<dbReference type="PhylomeDB" id="Q54FU9"/>
<dbReference type="PRO" id="PR:Q54FU9"/>
<dbReference type="Proteomes" id="UP000002195">
    <property type="component" value="Chromosome 5"/>
</dbReference>
<dbReference type="GO" id="GO:0005743">
    <property type="term" value="C:mitochondrial inner membrane"/>
    <property type="evidence" value="ECO:0007669"/>
    <property type="project" value="UniProtKB-SubCell"/>
</dbReference>
<dbReference type="GO" id="GO:0051724">
    <property type="term" value="F:NAD transmembrane transporter activity"/>
    <property type="evidence" value="ECO:0000318"/>
    <property type="project" value="GO_Central"/>
</dbReference>
<dbReference type="GO" id="GO:0035352">
    <property type="term" value="P:NAD transmembrane transport"/>
    <property type="evidence" value="ECO:0000318"/>
    <property type="project" value="GO_Central"/>
</dbReference>
<dbReference type="FunFam" id="1.50.40.10:FF:000346">
    <property type="entry name" value="Mitochondrial substrate carrier family protein W"/>
    <property type="match status" value="1"/>
</dbReference>
<dbReference type="Gene3D" id="1.50.40.10">
    <property type="entry name" value="Mitochondrial carrier domain"/>
    <property type="match status" value="2"/>
</dbReference>
<dbReference type="InterPro" id="IPR018108">
    <property type="entry name" value="Mitochondrial_sb/sol_carrier"/>
</dbReference>
<dbReference type="InterPro" id="IPR023395">
    <property type="entry name" value="Mt_carrier_dom_sf"/>
</dbReference>
<dbReference type="InterPro" id="IPR044712">
    <property type="entry name" value="SLC25A32-like"/>
</dbReference>
<dbReference type="PANTHER" id="PTHR45683">
    <property type="entry name" value="MITOCHONDRIAL NICOTINAMIDE ADENINE DINUCLEOTIDE TRANSPORTER 1-RELATED-RELATED"/>
    <property type="match status" value="1"/>
</dbReference>
<dbReference type="Pfam" id="PF00153">
    <property type="entry name" value="Mito_carr"/>
    <property type="match status" value="3"/>
</dbReference>
<dbReference type="SUPFAM" id="SSF103506">
    <property type="entry name" value="Mitochondrial carrier"/>
    <property type="match status" value="1"/>
</dbReference>
<dbReference type="PROSITE" id="PS50920">
    <property type="entry name" value="SOLCAR"/>
    <property type="match status" value="3"/>
</dbReference>
<gene>
    <name type="primary">mcfW</name>
    <name type="ORF">DDB_G0290669</name>
</gene>
<reference key="1">
    <citation type="journal article" date="2005" name="Nature">
        <title>The genome of the social amoeba Dictyostelium discoideum.</title>
        <authorList>
            <person name="Eichinger L."/>
            <person name="Pachebat J.A."/>
            <person name="Gloeckner G."/>
            <person name="Rajandream M.A."/>
            <person name="Sucgang R."/>
            <person name="Berriman M."/>
            <person name="Song J."/>
            <person name="Olsen R."/>
            <person name="Szafranski K."/>
            <person name="Xu Q."/>
            <person name="Tunggal B."/>
            <person name="Kummerfeld S."/>
            <person name="Madera M."/>
            <person name="Konfortov B.A."/>
            <person name="Rivero F."/>
            <person name="Bankier A.T."/>
            <person name="Lehmann R."/>
            <person name="Hamlin N."/>
            <person name="Davies R."/>
            <person name="Gaudet P."/>
            <person name="Fey P."/>
            <person name="Pilcher K."/>
            <person name="Chen G."/>
            <person name="Saunders D."/>
            <person name="Sodergren E.J."/>
            <person name="Davis P."/>
            <person name="Kerhornou A."/>
            <person name="Nie X."/>
            <person name="Hall N."/>
            <person name="Anjard C."/>
            <person name="Hemphill L."/>
            <person name="Bason N."/>
            <person name="Farbrother P."/>
            <person name="Desany B."/>
            <person name="Just E."/>
            <person name="Morio T."/>
            <person name="Rost R."/>
            <person name="Churcher C.M."/>
            <person name="Cooper J."/>
            <person name="Haydock S."/>
            <person name="van Driessche N."/>
            <person name="Cronin A."/>
            <person name="Goodhead I."/>
            <person name="Muzny D.M."/>
            <person name="Mourier T."/>
            <person name="Pain A."/>
            <person name="Lu M."/>
            <person name="Harper D."/>
            <person name="Lindsay R."/>
            <person name="Hauser H."/>
            <person name="James K.D."/>
            <person name="Quiles M."/>
            <person name="Madan Babu M."/>
            <person name="Saito T."/>
            <person name="Buchrieser C."/>
            <person name="Wardroper A."/>
            <person name="Felder M."/>
            <person name="Thangavelu M."/>
            <person name="Johnson D."/>
            <person name="Knights A."/>
            <person name="Loulseged H."/>
            <person name="Mungall K.L."/>
            <person name="Oliver K."/>
            <person name="Price C."/>
            <person name="Quail M.A."/>
            <person name="Urushihara H."/>
            <person name="Hernandez J."/>
            <person name="Rabbinowitsch E."/>
            <person name="Steffen D."/>
            <person name="Sanders M."/>
            <person name="Ma J."/>
            <person name="Kohara Y."/>
            <person name="Sharp S."/>
            <person name="Simmonds M.N."/>
            <person name="Spiegler S."/>
            <person name="Tivey A."/>
            <person name="Sugano S."/>
            <person name="White B."/>
            <person name="Walker D."/>
            <person name="Woodward J.R."/>
            <person name="Winckler T."/>
            <person name="Tanaka Y."/>
            <person name="Shaulsky G."/>
            <person name="Schleicher M."/>
            <person name="Weinstock G.M."/>
            <person name="Rosenthal A."/>
            <person name="Cox E.C."/>
            <person name="Chisholm R.L."/>
            <person name="Gibbs R.A."/>
            <person name="Loomis W.F."/>
            <person name="Platzer M."/>
            <person name="Kay R.R."/>
            <person name="Williams J.G."/>
            <person name="Dear P.H."/>
            <person name="Noegel A.A."/>
            <person name="Barrell B.G."/>
            <person name="Kuspa A."/>
        </authorList>
    </citation>
    <scope>NUCLEOTIDE SEQUENCE [LARGE SCALE GENOMIC DNA]</scope>
    <source>
        <strain>AX4</strain>
    </source>
</reference>
<reference key="2">
    <citation type="journal article" date="2007" name="Biochimie">
        <title>Mitochondrial carrier family: repertoire and peculiarities of the cellular slime mould Dictyostelium discoideum.</title>
        <authorList>
            <person name="Satre M."/>
            <person name="Mattei S."/>
            <person name="Aubry L."/>
            <person name="Gaudet P."/>
            <person name="Pelosi L."/>
            <person name="Brandolin G."/>
            <person name="Klein G."/>
        </authorList>
    </citation>
    <scope>REVIEW</scope>
</reference>
<organism>
    <name type="scientific">Dictyostelium discoideum</name>
    <name type="common">Social amoeba</name>
    <dbReference type="NCBI Taxonomy" id="44689"/>
    <lineage>
        <taxon>Eukaryota</taxon>
        <taxon>Amoebozoa</taxon>
        <taxon>Evosea</taxon>
        <taxon>Eumycetozoa</taxon>
        <taxon>Dictyostelia</taxon>
        <taxon>Dictyosteliales</taxon>
        <taxon>Dictyosteliaceae</taxon>
        <taxon>Dictyostelium</taxon>
    </lineage>
</organism>
<feature type="chain" id="PRO_0000385529" description="Mitochondrial substrate carrier family protein W">
    <location>
        <begin position="1"/>
        <end position="329"/>
    </location>
</feature>
<feature type="topological domain" description="Mitochondrial intermembrane" evidence="1">
    <location>
        <begin position="1"/>
        <end position="39"/>
    </location>
</feature>
<feature type="transmembrane region" description="Helical; Name=1" evidence="2">
    <location>
        <begin position="40"/>
        <end position="60"/>
    </location>
</feature>
<feature type="topological domain" description="Mitochondrial matrix" evidence="1">
    <location>
        <begin position="61"/>
        <end position="90"/>
    </location>
</feature>
<feature type="transmembrane region" description="Helical; Name=2" evidence="2">
    <location>
        <begin position="91"/>
        <end position="111"/>
    </location>
</feature>
<feature type="topological domain" description="Mitochondrial intermembrane" evidence="1">
    <location>
        <begin position="112"/>
        <end position="135"/>
    </location>
</feature>
<feature type="transmembrane region" description="Helical; Name=3" evidence="2">
    <location>
        <begin position="136"/>
        <end position="156"/>
    </location>
</feature>
<feature type="topological domain" description="Mitochondrial matrix" evidence="1">
    <location>
        <begin position="157"/>
        <end position="193"/>
    </location>
</feature>
<feature type="transmembrane region" description="Helical; Name=4" evidence="2">
    <location>
        <begin position="194"/>
        <end position="214"/>
    </location>
</feature>
<feature type="topological domain" description="Mitochondrial intermembrane" evidence="1">
    <location>
        <begin position="215"/>
        <end position="230"/>
    </location>
</feature>
<feature type="transmembrane region" description="Helical; Name=5" evidence="2">
    <location>
        <begin position="231"/>
        <end position="251"/>
    </location>
</feature>
<feature type="topological domain" description="Mitochondrial matrix" evidence="1">
    <location>
        <begin position="252"/>
        <end position="296"/>
    </location>
</feature>
<feature type="transmembrane region" description="Helical; Name=6" evidence="2">
    <location>
        <begin position="297"/>
        <end position="315"/>
    </location>
</feature>
<feature type="topological domain" description="Mitochondrial intermembrane" evidence="1">
    <location>
        <begin position="316"/>
        <end position="329"/>
    </location>
</feature>
<feature type="repeat" description="Solcar 1">
    <location>
        <begin position="34"/>
        <end position="119"/>
    </location>
</feature>
<feature type="repeat" description="Solcar 2">
    <location>
        <begin position="133"/>
        <end position="221"/>
    </location>
</feature>
<feature type="repeat" description="Solcar 3">
    <location>
        <begin position="231"/>
        <end position="321"/>
    </location>
</feature>
<keyword id="KW-0472">Membrane</keyword>
<keyword id="KW-0496">Mitochondrion</keyword>
<keyword id="KW-0999">Mitochondrion inner membrane</keyword>
<keyword id="KW-1185">Reference proteome</keyword>
<keyword id="KW-0677">Repeat</keyword>
<keyword id="KW-0812">Transmembrane</keyword>
<keyword id="KW-1133">Transmembrane helix</keyword>
<keyword id="KW-0813">Transport</keyword>
<sequence length="329" mass="37321">MTTNNSNDNNKRYGIIKQQLQQQQQQHHQQHEQHSRLVEMTAGCGAGFMASLFTTPLDVIKTTLQVDNSSNKTIMSTVKSILDRKGGVKNLYLGLKPTLVGQIPSWAVYFSTYTFCKELFTKENDKHSLLEKESPLIFMTSAIIAGAATSICTSPIWLIKTRFITQEMVGRQKKYRGIVHSMVSIYHEEGFRGLYKGLGPSLLGVLHVGVQFPLYEKFKSILKEKNKNKELGIVEIMIASSVSKIIASVVAYPHEVLRARSQDSSPDSPNRTYRGNIIQMFKQIVREEGWRGLYRGMGVNLLRVTPSCVITFTSYEYIKKFLSQNQNHF</sequence>